<sequence length="1668" mass="196635">MSKIRRKVTVENTKTISDSTSRRPSVFERLGPSTGSTAETQCRNWLKTGNCLYGNTCRFVHGPSPRGKGYSSNYRRSPERPTGDLRERMKNKRQDVDTEPQKRNTEESSSPVRKESSRGRHREKEDIKITKERTPESEEENVEWETNRDDSDNGDINYDYVHELSLEMKRQKIQRELMKLEQENMEKREEIIIKKEVSPEVVRSKLSPSPSLRKSSKSPKRKSSPKSSSASKKDRKTSAVSSPLLDQQRNSKTNQSKKKGPRTPSPPPPIPEDIALGKKYKEKYKVKDRIEEKTRDGKDRGRDFERQREKRDKPRSTSPAGQHHSPISSRHHSSSSQSGSSIQRHSPSPRRKRTPSPSYQRTLTPPLRRSASPYPSHSLSSPQRKQSPPRHRSPMREKGRHDHERTSQSHDRRHERREDTRGKRDREKDSREEREYEQDQSSSRDHRDDREPRDGRDRRDARDTRDRRELRDSRDMRDSREMRDYSRDTKESRDPRDSRSTRDAHDYRDREGRDTHRKEDTYPEESRSYGRNHLREESSRTEIRNESRNESRSEIRNDRMGRSRGRVPELPEKGSRGSRGSQIDSHSSNSNYHDSWETRSSYPERDRYPERDNRDQARDSSFERRHGERDRRDNRERDQRPSSPIRHQGRNDELERDERREERRVDRVDDRRDERARERDRERERDRERERERERERDREREKERELERERAREREREREKERDRERDRDRDHDRERERERERDREKEREREREERERERERERERERERERERERARERDKERERQRDWEDKDKGRDDRREKREEIREDRNPRDGHDERKSKKRYRNEGSPSPRQSPKRRREHSPDSDAYNSGDDKNEKHRLLSQVVRPQESRSLSPSHLTEDRQGRWKEEDRKPERKESSRRYEEQELKEKVSSVDKQREQTEILESSRMRAQDIIGHHQSEDRETSDRAHDENKKKAKIQKKPIKKKKEDDVGIERGNIETTSEDGQVFSPKKGQKKKSIEKKRKKSKGDSDISDEEAAQQSKKKRGPRTPPITTKEELVEMCNGKNGILEDSQKKEDTAFSDWSDEDVPDRTEVTEAEHTATATTPGSTPSPLSSLLPPPPPVATATATTVPATLAATTAAAATSFSTSAITISTSATPTNTTNNTFANEDSHRKCHRTRVEKVETPHVTIEDAQHRKPMDQKRSSSLGSNRSNRSHTSGRLRSPSNDSAHRSGDDQSGRKRVLHSGSRDREKTKSLEITGERKSRIDQLKRGEPSRSTSSDRQDSRSHSSRRSSPESDRQVHSRSGSFDSRDRLQERDRYEHDRERERERRDTRQREWDRDADKDWPRNRDRDRLRERERERERDKRRDLDRERERLISDSVERDRDRDRDRTFESSQIESVKRCEAKLEGEHERDLESTSRDSLALDKERMDKDLGSVQGFEETNKSERTESLEGDDESKLDDAHSLGSGAGEGYEPISDDELDEILAGDAEKREDQQDEEKMPDPLDVIDVDWSGLMPKHPKEPREPGAALLKFTPGAVMLRVGISKKLAGSELFAKVKETCQRLLEKPKDADNLFEHELGALNMAALLRKEERASLLSNLGPCCKALCFRRDSAIRKQLVKNEKGTIKQAYTSAPMVDNELLRLSLRLFKRKTTCHAPGHEKTEDNKLSQSSIQQELCVS</sequence>
<keyword id="KW-0002">3D-structure</keyword>
<keyword id="KW-0025">Alternative splicing</keyword>
<keyword id="KW-0175">Coiled coil</keyword>
<keyword id="KW-0217">Developmental protein</keyword>
<keyword id="KW-1017">Isopeptide bond</keyword>
<keyword id="KW-0479">Metal-binding</keyword>
<keyword id="KW-0507">mRNA processing</keyword>
<keyword id="KW-0508">mRNA splicing</keyword>
<keyword id="KW-0539">Nucleus</keyword>
<keyword id="KW-0597">Phosphoprotein</keyword>
<keyword id="KW-1267">Proteomics identification</keyword>
<keyword id="KW-1185">Reference proteome</keyword>
<keyword id="KW-0677">Repeat</keyword>
<keyword id="KW-0832">Ubl conjugation</keyword>
<keyword id="KW-0862">Zinc</keyword>
<keyword id="KW-0863">Zinc-finger</keyword>
<accession>Q5T200</accession>
<accession>A2A323</accession>
<accession>O94936</accession>
<accession>Q5T1Z9</accession>
<accession>Q7Z7J3</accession>
<accession>Q8NDT6</accession>
<accession>Q9H0L6</accession>
<comment type="function">
    <text evidence="1">Associated component of the WMM complex, a complex that mediates N6-methyladenosine (m6A) methylation of RNAs, a modification that plays a role in the efficiency of mRNA splicing and RNA processing (PubMed:29507755). Acts as a key regulator of m6A methylation by promoting m6A methylation of mRNAs at the 3'-UTR (By similarity). Controls embryonic stem cells (ESCs) pluripotency via its role in m6A methylation (By similarity). In the WMM complex, anchors component of the MACOM subcomplex in the nucleus (By similarity). Also required for bridging WTAP to the RNA-binding component RBM15 (RBM15 or RBM15B) (By similarity).</text>
</comment>
<comment type="subunit">
    <text evidence="8 9">Component of the WMM complex, a N6-methyltransferase complex composed of a catalytic subcomplex, named MAC, and of an associated subcomplex, named MACOM (PubMed:29507755). The MAC subcomplex is composed of METTL3 and METTL14. The MACOM subcomplex is composed of WTAP, ZC3H13, CBLL1/HAKAI, VIRMA, and, in some cases of RBM15 (RBM15 or RBM15B) (PubMed:29507755). Also a component of a MACOM-like complex, named WTAP complex, composed of WTAP, ZC3H13, CBLL1/HAKAI, VIRMA, RBM15, BCLAF1 and THRAP3 (PubMed:24100041).</text>
</comment>
<comment type="interaction">
    <interactant intactId="EBI-2679720">
        <id>Q5T200</id>
    </interactant>
    <interactant intactId="EBI-1397509">
        <id>P0DPB3</id>
        <label>SCHIP1</label>
    </interactant>
    <organismsDiffer>false</organismsDiffer>
    <experiments>2</experiments>
</comment>
<comment type="subcellular location">
    <subcellularLocation>
        <location evidence="8">Nucleus speckle</location>
    </subcellularLocation>
    <subcellularLocation>
        <location evidence="8">Nucleus</location>
        <location evidence="8">Nucleoplasm</location>
    </subcellularLocation>
</comment>
<comment type="alternative products">
    <event type="alternative splicing"/>
    <isoform>
        <id>Q5T200-1</id>
        <name>1</name>
        <sequence type="displayed"/>
    </isoform>
    <isoform>
        <id>Q5T200-2</id>
        <name>2</name>
        <sequence type="described" ref="VSP_027202 VSP_014252 VSP_014253"/>
    </isoform>
</comment>
<comment type="similarity">
    <text evidence="15">Belongs to the ZC3H13 family.</text>
</comment>
<evidence type="ECO:0000250" key="1">
    <source>
        <dbReference type="UniProtKB" id="E9Q784"/>
    </source>
</evidence>
<evidence type="ECO:0000255" key="2"/>
<evidence type="ECO:0000255" key="3">
    <source>
        <dbReference type="PROSITE-ProRule" id="PRU00723"/>
    </source>
</evidence>
<evidence type="ECO:0000256" key="4">
    <source>
        <dbReference type="SAM" id="MobiDB-lite"/>
    </source>
</evidence>
<evidence type="ECO:0000269" key="5">
    <source>
    </source>
</evidence>
<evidence type="ECO:0000269" key="6">
    <source>
    </source>
</evidence>
<evidence type="ECO:0000269" key="7">
    <source>
    </source>
</evidence>
<evidence type="ECO:0000269" key="8">
    <source>
    </source>
</evidence>
<evidence type="ECO:0000269" key="9">
    <source>
    </source>
</evidence>
<evidence type="ECO:0000269" key="10">
    <source ref="1"/>
</evidence>
<evidence type="ECO:0000303" key="11">
    <source>
    </source>
</evidence>
<evidence type="ECO:0000303" key="12">
    <source>
    </source>
</evidence>
<evidence type="ECO:0000303" key="13">
    <source>
    </source>
</evidence>
<evidence type="ECO:0000303" key="14">
    <source ref="1"/>
</evidence>
<evidence type="ECO:0000305" key="15"/>
<evidence type="ECO:0000312" key="16">
    <source>
        <dbReference type="HGNC" id="HGNC:20368"/>
    </source>
</evidence>
<evidence type="ECO:0007744" key="17">
    <source>
    </source>
</evidence>
<evidence type="ECO:0007744" key="18">
    <source>
    </source>
</evidence>
<evidence type="ECO:0007744" key="19">
    <source>
    </source>
</evidence>
<evidence type="ECO:0007744" key="20">
    <source>
    </source>
</evidence>
<evidence type="ECO:0007744" key="21">
    <source>
    </source>
</evidence>
<evidence type="ECO:0007744" key="22">
    <source>
    </source>
</evidence>
<evidence type="ECO:0007744" key="23">
    <source>
    </source>
</evidence>
<evidence type="ECO:0007744" key="24">
    <source>
    </source>
</evidence>
<evidence type="ECO:0007744" key="25">
    <source>
    </source>
</evidence>
<evidence type="ECO:0007744" key="26">
    <source>
    </source>
</evidence>
<evidence type="ECO:0007744" key="27">
    <source>
    </source>
</evidence>
<evidence type="ECO:0007744" key="28">
    <source>
    </source>
</evidence>
<evidence type="ECO:0007744" key="29">
    <source>
    </source>
</evidence>
<evidence type="ECO:0007744" key="30">
    <source>
    </source>
</evidence>
<evidence type="ECO:0007829" key="31">
    <source>
        <dbReference type="PDB" id="7VF2"/>
    </source>
</evidence>
<name>ZC3HD_HUMAN</name>
<dbReference type="EMBL" id="AY283618">
    <property type="protein sequence ID" value="AAP37483.1"/>
    <property type="molecule type" value="mRNA"/>
</dbReference>
<dbReference type="EMBL" id="AL157758">
    <property type="status" value="NOT_ANNOTATED_CDS"/>
    <property type="molecule type" value="Genomic_DNA"/>
</dbReference>
<dbReference type="EMBL" id="AL445232">
    <property type="status" value="NOT_ANNOTATED_CDS"/>
    <property type="molecule type" value="Genomic_DNA"/>
</dbReference>
<dbReference type="EMBL" id="AL831833">
    <property type="protein sequence ID" value="CAD38544.1"/>
    <property type="molecule type" value="mRNA"/>
</dbReference>
<dbReference type="EMBL" id="AL136745">
    <property type="protein sequence ID" value="CAB66679.2"/>
    <property type="molecule type" value="mRNA"/>
</dbReference>
<dbReference type="EMBL" id="AB020660">
    <property type="protein sequence ID" value="BAA74876.1"/>
    <property type="molecule type" value="mRNA"/>
</dbReference>
<dbReference type="CCDS" id="CCDS81766.1">
    <molecule id="Q5T200-1"/>
</dbReference>
<dbReference type="CCDS" id="CCDS9400.1">
    <molecule id="Q5T200-2"/>
</dbReference>
<dbReference type="RefSeq" id="NP_001070256.1">
    <property type="nucleotide sequence ID" value="NM_001076788.1"/>
</dbReference>
<dbReference type="RefSeq" id="NP_001317493.1">
    <property type="nucleotide sequence ID" value="NM_001330564.1"/>
</dbReference>
<dbReference type="RefSeq" id="NP_001317494.1">
    <molecule id="Q5T200-1"/>
    <property type="nucleotide sequence ID" value="NM_001330565.2"/>
</dbReference>
<dbReference type="RefSeq" id="NP_001317495.1">
    <molecule id="Q5T200-1"/>
    <property type="nucleotide sequence ID" value="NM_001330566.2"/>
</dbReference>
<dbReference type="RefSeq" id="NP_001317496.1">
    <molecule id="Q5T200-1"/>
    <property type="nucleotide sequence ID" value="NM_001330567.2"/>
</dbReference>
<dbReference type="RefSeq" id="NP_001369138.1">
    <molecule id="Q5T200-1"/>
    <property type="nucleotide sequence ID" value="NM_001382209.1"/>
</dbReference>
<dbReference type="RefSeq" id="NP_001369139.1">
    <molecule id="Q5T200-1"/>
    <property type="nucleotide sequence ID" value="NM_001382210.1"/>
</dbReference>
<dbReference type="RefSeq" id="NP_055885.3">
    <molecule id="Q5T200-2"/>
    <property type="nucleotide sequence ID" value="NM_015070.5"/>
</dbReference>
<dbReference type="RefSeq" id="XP_005266369.1">
    <property type="nucleotide sequence ID" value="XM_005266312.1"/>
</dbReference>
<dbReference type="RefSeq" id="XP_047286163.1">
    <molecule id="Q5T200-1"/>
    <property type="nucleotide sequence ID" value="XM_047430207.1"/>
</dbReference>
<dbReference type="RefSeq" id="XP_047286164.1">
    <molecule id="Q5T200-1"/>
    <property type="nucleotide sequence ID" value="XM_047430208.1"/>
</dbReference>
<dbReference type="PDB" id="7VF2">
    <property type="method" value="EM"/>
    <property type="resolution" value="3.00 A"/>
    <property type="chains" value="B=1106-1668"/>
</dbReference>
<dbReference type="PDBsum" id="7VF2"/>
<dbReference type="EMDB" id="EMD-31946"/>
<dbReference type="SMR" id="Q5T200"/>
<dbReference type="BioGRID" id="116719">
    <property type="interactions" value="157"/>
</dbReference>
<dbReference type="ComplexPortal" id="CPX-1605">
    <property type="entry name" value="WMM N6-adenosine-methyltransferase complex"/>
</dbReference>
<dbReference type="CORUM" id="Q5T200"/>
<dbReference type="FunCoup" id="Q5T200">
    <property type="interactions" value="3325"/>
</dbReference>
<dbReference type="IntAct" id="Q5T200">
    <property type="interactions" value="67"/>
</dbReference>
<dbReference type="MINT" id="Q5T200"/>
<dbReference type="STRING" id="9606.ENSP00000242848"/>
<dbReference type="GlyGen" id="Q5T200">
    <property type="glycosylation" value="6 sites, 1 N-linked glycan (1 site), 1 O-linked glycan (4 sites)"/>
</dbReference>
<dbReference type="iPTMnet" id="Q5T200"/>
<dbReference type="PhosphoSitePlus" id="Q5T200"/>
<dbReference type="BioMuta" id="ZC3H13"/>
<dbReference type="DMDM" id="68052314"/>
<dbReference type="jPOST" id="Q5T200"/>
<dbReference type="MassIVE" id="Q5T200"/>
<dbReference type="PaxDb" id="9606-ENSP00000282007"/>
<dbReference type="PeptideAtlas" id="Q5T200"/>
<dbReference type="ProteomicsDB" id="64298">
    <molecule id="Q5T200-1"/>
</dbReference>
<dbReference type="ProteomicsDB" id="64299">
    <molecule id="Q5T200-2"/>
</dbReference>
<dbReference type="Pumba" id="Q5T200"/>
<dbReference type="Antibodypedia" id="23654">
    <property type="antibodies" value="105 antibodies from 22 providers"/>
</dbReference>
<dbReference type="DNASU" id="23091"/>
<dbReference type="Ensembl" id="ENST00000242848.8">
    <molecule id="Q5T200-1"/>
    <property type="protein sequence ID" value="ENSP00000242848.4"/>
    <property type="gene ID" value="ENSG00000123200.17"/>
</dbReference>
<dbReference type="Ensembl" id="ENST00000282007.7">
    <molecule id="Q5T200-2"/>
    <property type="protein sequence ID" value="ENSP00000282007.3"/>
    <property type="gene ID" value="ENSG00000123200.17"/>
</dbReference>
<dbReference type="GeneID" id="23091"/>
<dbReference type="KEGG" id="hsa:23091"/>
<dbReference type="UCSC" id="uc001vas.3">
    <molecule id="Q5T200-1"/>
    <property type="organism name" value="human"/>
</dbReference>
<dbReference type="AGR" id="HGNC:20368"/>
<dbReference type="CTD" id="23091"/>
<dbReference type="DisGeNET" id="23091"/>
<dbReference type="GeneCards" id="ZC3H13"/>
<dbReference type="HGNC" id="HGNC:20368">
    <property type="gene designation" value="ZC3H13"/>
</dbReference>
<dbReference type="HPA" id="ENSG00000123200">
    <property type="expression patterns" value="Low tissue specificity"/>
</dbReference>
<dbReference type="MIM" id="616453">
    <property type="type" value="gene"/>
</dbReference>
<dbReference type="neXtProt" id="NX_Q5T200"/>
<dbReference type="OpenTargets" id="ENSG00000123200"/>
<dbReference type="PharmGKB" id="PA134907656"/>
<dbReference type="VEuPathDB" id="HostDB:ENSG00000123200"/>
<dbReference type="eggNOG" id="KOG1874">
    <property type="taxonomic scope" value="Eukaryota"/>
</dbReference>
<dbReference type="GeneTree" id="ENSGT00730000111163"/>
<dbReference type="HOGENOM" id="CLU_003683_0_0_1"/>
<dbReference type="InParanoid" id="Q5T200"/>
<dbReference type="OrthoDB" id="6022762at2759"/>
<dbReference type="PAN-GO" id="Q5T200">
    <property type="GO annotations" value="1 GO annotation based on evolutionary models"/>
</dbReference>
<dbReference type="PhylomeDB" id="Q5T200"/>
<dbReference type="TreeFam" id="TF332670"/>
<dbReference type="PathwayCommons" id="Q5T200"/>
<dbReference type="SignaLink" id="Q5T200"/>
<dbReference type="BioGRID-ORCS" id="23091">
    <property type="hits" value="236 hits in 1167 CRISPR screens"/>
</dbReference>
<dbReference type="ChiTaRS" id="ZC3H13">
    <property type="organism name" value="human"/>
</dbReference>
<dbReference type="GeneWiki" id="ZC3H13"/>
<dbReference type="GenomeRNAi" id="23091"/>
<dbReference type="Pharos" id="Q5T200">
    <property type="development level" value="Tbio"/>
</dbReference>
<dbReference type="PRO" id="PR:Q5T200"/>
<dbReference type="Proteomes" id="UP000005640">
    <property type="component" value="Chromosome 13"/>
</dbReference>
<dbReference type="RNAct" id="Q5T200">
    <property type="molecule type" value="protein"/>
</dbReference>
<dbReference type="Bgee" id="ENSG00000123200">
    <property type="expression patterns" value="Expressed in sural nerve and 214 other cell types or tissues"/>
</dbReference>
<dbReference type="ExpressionAtlas" id="Q5T200">
    <property type="expression patterns" value="baseline and differential"/>
</dbReference>
<dbReference type="GO" id="GO:0016607">
    <property type="term" value="C:nuclear speck"/>
    <property type="evidence" value="ECO:0000314"/>
    <property type="project" value="UniProtKB"/>
</dbReference>
<dbReference type="GO" id="GO:0005654">
    <property type="term" value="C:nucleoplasm"/>
    <property type="evidence" value="ECO:0000314"/>
    <property type="project" value="HPA"/>
</dbReference>
<dbReference type="GO" id="GO:0005634">
    <property type="term" value="C:nucleus"/>
    <property type="evidence" value="ECO:0000303"/>
    <property type="project" value="ComplexPortal"/>
</dbReference>
<dbReference type="GO" id="GO:0036396">
    <property type="term" value="C:RNA N6-methyladenosine methyltransferase complex"/>
    <property type="evidence" value="ECO:0000314"/>
    <property type="project" value="UniProtKB"/>
</dbReference>
<dbReference type="GO" id="GO:0003723">
    <property type="term" value="F:RNA binding"/>
    <property type="evidence" value="ECO:0007005"/>
    <property type="project" value="UniProtKB"/>
</dbReference>
<dbReference type="GO" id="GO:0008270">
    <property type="term" value="F:zinc ion binding"/>
    <property type="evidence" value="ECO:0007669"/>
    <property type="project" value="UniProtKB-KW"/>
</dbReference>
<dbReference type="GO" id="GO:0006397">
    <property type="term" value="P:mRNA processing"/>
    <property type="evidence" value="ECO:0000315"/>
    <property type="project" value="UniProtKB"/>
</dbReference>
<dbReference type="GO" id="GO:2000036">
    <property type="term" value="P:regulation of stem cell population maintenance"/>
    <property type="evidence" value="ECO:0000250"/>
    <property type="project" value="UniProtKB"/>
</dbReference>
<dbReference type="GO" id="GO:0008380">
    <property type="term" value="P:RNA splicing"/>
    <property type="evidence" value="ECO:0007669"/>
    <property type="project" value="UniProtKB-KW"/>
</dbReference>
<dbReference type="Gene3D" id="4.10.1000.10">
    <property type="entry name" value="Zinc finger, CCCH-type"/>
    <property type="match status" value="1"/>
</dbReference>
<dbReference type="InterPro" id="IPR052824">
    <property type="entry name" value="m6A_RNA_Methylation_Regulator"/>
</dbReference>
<dbReference type="InterPro" id="IPR000571">
    <property type="entry name" value="Znf_CCCH"/>
</dbReference>
<dbReference type="InterPro" id="IPR036855">
    <property type="entry name" value="Znf_CCCH_sf"/>
</dbReference>
<dbReference type="PANTHER" id="PTHR13585">
    <property type="entry name" value="CHASCON, ISOFORM D-RELATED"/>
    <property type="match status" value="1"/>
</dbReference>
<dbReference type="PANTHER" id="PTHR13585:SF19">
    <property type="entry name" value="ZINC FINGER CCCH DOMAIN-CONTAINING PROTEIN 13"/>
    <property type="match status" value="1"/>
</dbReference>
<dbReference type="Pfam" id="PF00642">
    <property type="entry name" value="zf-CCCH"/>
    <property type="match status" value="1"/>
</dbReference>
<dbReference type="SMART" id="SM00356">
    <property type="entry name" value="ZnF_C3H1"/>
    <property type="match status" value="1"/>
</dbReference>
<dbReference type="SUPFAM" id="SSF90229">
    <property type="entry name" value="CCCH zinc finger"/>
    <property type="match status" value="1"/>
</dbReference>
<dbReference type="PROSITE" id="PS50103">
    <property type="entry name" value="ZF_C3H1"/>
    <property type="match status" value="1"/>
</dbReference>
<gene>
    <name evidence="13 16" type="primary">ZC3H13</name>
    <name evidence="11" type="synonym">KIAA0853</name>
</gene>
<organism>
    <name type="scientific">Homo sapiens</name>
    <name type="common">Human</name>
    <dbReference type="NCBI Taxonomy" id="9606"/>
    <lineage>
        <taxon>Eukaryota</taxon>
        <taxon>Metazoa</taxon>
        <taxon>Chordata</taxon>
        <taxon>Craniata</taxon>
        <taxon>Vertebrata</taxon>
        <taxon>Euteleostomi</taxon>
        <taxon>Mammalia</taxon>
        <taxon>Eutheria</taxon>
        <taxon>Euarchontoglires</taxon>
        <taxon>Primates</taxon>
        <taxon>Haplorrhini</taxon>
        <taxon>Catarrhini</taxon>
        <taxon>Hominidae</taxon>
        <taxon>Homo</taxon>
    </lineage>
</organism>
<reference key="1">
    <citation type="submission" date="2003-04" db="EMBL/GenBank/DDBJ databases">
        <authorList>
            <person name="Shan Y.X."/>
            <person name="Yu L."/>
        </authorList>
    </citation>
    <scope>NUCLEOTIDE SEQUENCE [MRNA] (ISOFORM 2)</scope>
    <scope>VARIANT ASP-1429</scope>
</reference>
<reference key="2">
    <citation type="journal article" date="2004" name="Nature">
        <title>The DNA sequence and analysis of human chromosome 13.</title>
        <authorList>
            <person name="Dunham A."/>
            <person name="Matthews L.H."/>
            <person name="Burton J."/>
            <person name="Ashurst J.L."/>
            <person name="Howe K.L."/>
            <person name="Ashcroft K.J."/>
            <person name="Beare D.M."/>
            <person name="Burford D.C."/>
            <person name="Hunt S.E."/>
            <person name="Griffiths-Jones S."/>
            <person name="Jones M.C."/>
            <person name="Keenan S.J."/>
            <person name="Oliver K."/>
            <person name="Scott C.E."/>
            <person name="Ainscough R."/>
            <person name="Almeida J.P."/>
            <person name="Ambrose K.D."/>
            <person name="Andrews D.T."/>
            <person name="Ashwell R.I.S."/>
            <person name="Babbage A.K."/>
            <person name="Bagguley C.L."/>
            <person name="Bailey J."/>
            <person name="Bannerjee R."/>
            <person name="Barlow K.F."/>
            <person name="Bates K."/>
            <person name="Beasley H."/>
            <person name="Bird C.P."/>
            <person name="Bray-Allen S."/>
            <person name="Brown A.J."/>
            <person name="Brown J.Y."/>
            <person name="Burrill W."/>
            <person name="Carder C."/>
            <person name="Carter N.P."/>
            <person name="Chapman J.C."/>
            <person name="Clamp M.E."/>
            <person name="Clark S.Y."/>
            <person name="Clarke G."/>
            <person name="Clee C.M."/>
            <person name="Clegg S.C."/>
            <person name="Cobley V."/>
            <person name="Collins J.E."/>
            <person name="Corby N."/>
            <person name="Coville G.J."/>
            <person name="Deloukas P."/>
            <person name="Dhami P."/>
            <person name="Dunham I."/>
            <person name="Dunn M."/>
            <person name="Earthrowl M.E."/>
            <person name="Ellington A.G."/>
            <person name="Faulkner L."/>
            <person name="Frankish A.G."/>
            <person name="Frankland J."/>
            <person name="French L."/>
            <person name="Garner P."/>
            <person name="Garnett J."/>
            <person name="Gilbert J.G.R."/>
            <person name="Gilson C.J."/>
            <person name="Ghori J."/>
            <person name="Grafham D.V."/>
            <person name="Gribble S.M."/>
            <person name="Griffiths C."/>
            <person name="Hall R.E."/>
            <person name="Hammond S."/>
            <person name="Harley J.L."/>
            <person name="Hart E.A."/>
            <person name="Heath P.D."/>
            <person name="Howden P.J."/>
            <person name="Huckle E.J."/>
            <person name="Hunt P.J."/>
            <person name="Hunt A.R."/>
            <person name="Johnson C."/>
            <person name="Johnson D."/>
            <person name="Kay M."/>
            <person name="Kimberley A.M."/>
            <person name="King A."/>
            <person name="Laird G.K."/>
            <person name="Langford C.J."/>
            <person name="Lawlor S."/>
            <person name="Leongamornlert D.A."/>
            <person name="Lloyd D.M."/>
            <person name="Lloyd C."/>
            <person name="Loveland J.E."/>
            <person name="Lovell J."/>
            <person name="Martin S."/>
            <person name="Mashreghi-Mohammadi M."/>
            <person name="McLaren S.J."/>
            <person name="McMurray A."/>
            <person name="Milne S."/>
            <person name="Moore M.J.F."/>
            <person name="Nickerson T."/>
            <person name="Palmer S.A."/>
            <person name="Pearce A.V."/>
            <person name="Peck A.I."/>
            <person name="Pelan S."/>
            <person name="Phillimore B."/>
            <person name="Porter K.M."/>
            <person name="Rice C.M."/>
            <person name="Searle S."/>
            <person name="Sehra H.K."/>
            <person name="Shownkeen R."/>
            <person name="Skuce C.D."/>
            <person name="Smith M."/>
            <person name="Steward C.A."/>
            <person name="Sycamore N."/>
            <person name="Tester J."/>
            <person name="Thomas D.W."/>
            <person name="Tracey A."/>
            <person name="Tromans A."/>
            <person name="Tubby B."/>
            <person name="Wall M."/>
            <person name="Wallis J.M."/>
            <person name="West A.P."/>
            <person name="Whitehead S.L."/>
            <person name="Willey D.L."/>
            <person name="Wilming L."/>
            <person name="Wray P.W."/>
            <person name="Wright M.W."/>
            <person name="Young L."/>
            <person name="Coulson A."/>
            <person name="Durbin R.M."/>
            <person name="Hubbard T."/>
            <person name="Sulston J.E."/>
            <person name="Beck S."/>
            <person name="Bentley D.R."/>
            <person name="Rogers J."/>
            <person name="Ross M.T."/>
        </authorList>
    </citation>
    <scope>NUCLEOTIDE SEQUENCE [LARGE SCALE GENOMIC DNA]</scope>
</reference>
<reference key="3">
    <citation type="journal article" date="2007" name="BMC Genomics">
        <title>The full-ORF clone resource of the German cDNA consortium.</title>
        <authorList>
            <person name="Bechtel S."/>
            <person name="Rosenfelder H."/>
            <person name="Duda A."/>
            <person name="Schmidt C.P."/>
            <person name="Ernst U."/>
            <person name="Wellenreuther R."/>
            <person name="Mehrle A."/>
            <person name="Schuster C."/>
            <person name="Bahr A."/>
            <person name="Bloecker H."/>
            <person name="Heubner D."/>
            <person name="Hoerlein A."/>
            <person name="Michel G."/>
            <person name="Wedler H."/>
            <person name="Koehrer K."/>
            <person name="Ottenwaelder B."/>
            <person name="Poustka A."/>
            <person name="Wiemann S."/>
            <person name="Schupp I."/>
        </authorList>
    </citation>
    <scope>NUCLEOTIDE SEQUENCE [LARGE SCALE MRNA] OF 176-971</scope>
    <scope>VARIANT ASP-1429</scope>
    <source>
        <tissue>Fetal brain</tissue>
    </source>
</reference>
<reference key="4">
    <citation type="journal article" date="2001" name="Genome Res.">
        <title>Towards a catalog of human genes and proteins: sequencing and analysis of 500 novel complete protein coding human cDNAs.</title>
        <authorList>
            <person name="Wiemann S."/>
            <person name="Weil B."/>
            <person name="Wellenreuther R."/>
            <person name="Gassenhuber J."/>
            <person name="Glassl S."/>
            <person name="Ansorge W."/>
            <person name="Boecher M."/>
            <person name="Bloecker H."/>
            <person name="Bauersachs S."/>
            <person name="Blum H."/>
            <person name="Lauber J."/>
            <person name="Duesterhoeft A."/>
            <person name="Beyer A."/>
            <person name="Koehrer K."/>
            <person name="Strack N."/>
            <person name="Mewes H.-W."/>
            <person name="Ottenwaelder B."/>
            <person name="Obermaier B."/>
            <person name="Tampe J."/>
            <person name="Heubner D."/>
            <person name="Wambutt R."/>
            <person name="Korn B."/>
            <person name="Klein M."/>
            <person name="Poustka A."/>
        </authorList>
    </citation>
    <scope>NUCLEOTIDE SEQUENCE [LARGE SCALE MRNA] OF 298-1668 (ISOFORM 2)</scope>
    <scope>VARIANT ASP-1429</scope>
    <source>
        <tissue>Testis</tissue>
    </source>
</reference>
<reference key="5">
    <citation type="journal article" date="1998" name="DNA Res.">
        <title>Prediction of the coding sequences of unidentified human genes. XII. The complete sequences of 100 new cDNA clones from brain which code for large proteins in vitro.</title>
        <authorList>
            <person name="Nagase T."/>
            <person name="Ishikawa K."/>
            <person name="Suyama M."/>
            <person name="Kikuno R."/>
            <person name="Hirosawa M."/>
            <person name="Miyajima N."/>
            <person name="Tanaka A."/>
            <person name="Kotani H."/>
            <person name="Nomura N."/>
            <person name="Ohara O."/>
        </authorList>
    </citation>
    <scope>NUCLEOTIDE SEQUENCE [LARGE SCALE MRNA] OF 702-1668 (ISOFORM 1)</scope>
    <scope>VARIANT ASP-1429</scope>
    <source>
        <tissue>Brain</tissue>
    </source>
</reference>
<reference key="6">
    <citation type="journal article" date="2004" name="Anal. Chem.">
        <title>Robust phosphoproteomic profiling of tyrosine phosphorylation sites from human T cells using immobilized metal affinity chromatography and tandem mass spectrometry.</title>
        <authorList>
            <person name="Brill L.M."/>
            <person name="Salomon A.R."/>
            <person name="Ficarro S.B."/>
            <person name="Mukherji M."/>
            <person name="Stettler-Gill M."/>
            <person name="Peters E.C."/>
        </authorList>
    </citation>
    <scope>PHOSPHORYLATION [LARGE SCALE ANALYSIS] AT THR-263 AND SER-265</scope>
    <scope>IDENTIFICATION BY MASS SPECTROMETRY [LARGE SCALE ANALYSIS]</scope>
    <source>
        <tissue>Leukemic T-cell</tissue>
    </source>
</reference>
<reference key="7">
    <citation type="journal article" date="2006" name="Cell">
        <title>Global, in vivo, and site-specific phosphorylation dynamics in signaling networks.</title>
        <authorList>
            <person name="Olsen J.V."/>
            <person name="Blagoev B."/>
            <person name="Gnad F."/>
            <person name="Macek B."/>
            <person name="Kumar C."/>
            <person name="Mortensen P."/>
            <person name="Mann M."/>
        </authorList>
    </citation>
    <scope>PHOSPHORYLATION [LARGE SCALE ANALYSIS] AT SER-198; THR-263 AND SER-265</scope>
    <scope>IDENTIFICATION BY MASS SPECTROMETRY [LARGE SCALE ANALYSIS]</scope>
    <source>
        <tissue>Cervix carcinoma</tissue>
    </source>
</reference>
<reference key="8">
    <citation type="journal article" date="2006" name="Nat. Biotechnol.">
        <title>A probability-based approach for high-throughput protein phosphorylation analysis and site localization.</title>
        <authorList>
            <person name="Beausoleil S.A."/>
            <person name="Villen J."/>
            <person name="Gerber S.A."/>
            <person name="Rush J."/>
            <person name="Gygi S.P."/>
        </authorList>
    </citation>
    <scope>PHOSPHORYLATION [LARGE SCALE ANALYSIS] AT SER-242; THR-263; SER-265 AND SER-993</scope>
    <scope>IDENTIFICATION BY MASS SPECTROMETRY [LARGE SCALE ANALYSIS]</scope>
    <source>
        <tissue>Cervix carcinoma</tissue>
    </source>
</reference>
<reference key="9">
    <citation type="journal article" date="2007" name="Science">
        <title>ATM and ATR substrate analysis reveals extensive protein networks responsive to DNA damage.</title>
        <authorList>
            <person name="Matsuoka S."/>
            <person name="Ballif B.A."/>
            <person name="Smogorzewska A."/>
            <person name="McDonald E.R. III"/>
            <person name="Hurov K.E."/>
            <person name="Luo J."/>
            <person name="Bakalarski C.E."/>
            <person name="Zhao Z."/>
            <person name="Solimini N."/>
            <person name="Lerenthal Y."/>
            <person name="Shiloh Y."/>
            <person name="Gygi S.P."/>
            <person name="Elledge S.J."/>
        </authorList>
    </citation>
    <scope>PHOSPHORYLATION [LARGE SCALE ANALYSIS] AT SER-1382</scope>
    <scope>IDENTIFICATION BY MASS SPECTROMETRY [LARGE SCALE ANALYSIS]</scope>
    <source>
        <tissue>Embryonic kidney</tissue>
    </source>
</reference>
<reference key="10">
    <citation type="journal article" date="2008" name="J. Proteome Res.">
        <title>Combining protein-based IMAC, peptide-based IMAC, and MudPIT for efficient phosphoproteomic analysis.</title>
        <authorList>
            <person name="Cantin G.T."/>
            <person name="Yi W."/>
            <person name="Lu B."/>
            <person name="Park S.K."/>
            <person name="Xu T."/>
            <person name="Lee J.-D."/>
            <person name="Yates J.R. III"/>
        </authorList>
    </citation>
    <scope>IDENTIFICATION BY MASS SPECTROMETRY [LARGE SCALE ANALYSIS]</scope>
    <source>
        <tissue>Cervix carcinoma</tissue>
    </source>
</reference>
<reference key="11">
    <citation type="journal article" date="2008" name="Proc. Natl. Acad. Sci. U.S.A.">
        <title>A quantitative atlas of mitotic phosphorylation.</title>
        <authorList>
            <person name="Dephoure N."/>
            <person name="Zhou C."/>
            <person name="Villen J."/>
            <person name="Beausoleil S.A."/>
            <person name="Bakalarski C.E."/>
            <person name="Elledge S.J."/>
            <person name="Gygi S.P."/>
        </authorList>
    </citation>
    <scope>PHOSPHORYLATION [LARGE SCALE ANALYSIS] AT SER-207; SER-209; SER-242; SER-316; SER-318; SER-325; THR-354; THR-364; SER-370; SER-372; SER-381; SER-831; SER-833; SER-837; SER-845; SER-848; SER-853; SER-875; SER-877; SER-986; SER-993; SER-1010; SER-1014 AND SER-1017</scope>
    <scope>PHOSPHORYLATION [LARGE SCALE ANALYSIS] AT SER-1453; SER-1456 AND SER-1466 (ISOFORM 2)</scope>
    <scope>IDENTIFICATION BY MASS SPECTROMETRY [LARGE SCALE ANALYSIS]</scope>
    <source>
        <tissue>Cervix carcinoma</tissue>
    </source>
</reference>
<reference key="12">
    <citation type="journal article" date="2009" name="Anal. Chem.">
        <title>Lys-N and trypsin cover complementary parts of the phosphoproteome in a refined SCX-based approach.</title>
        <authorList>
            <person name="Gauci S."/>
            <person name="Helbig A.O."/>
            <person name="Slijper M."/>
            <person name="Krijgsveld J."/>
            <person name="Heck A.J."/>
            <person name="Mohammed S."/>
        </authorList>
    </citation>
    <scope>IDENTIFICATION BY MASS SPECTROMETRY [LARGE SCALE ANALYSIS]</scope>
</reference>
<reference key="13">
    <citation type="journal article" date="2009" name="Sci. Signal.">
        <title>Quantitative phosphoproteomic analysis of T cell receptor signaling reveals system-wide modulation of protein-protein interactions.</title>
        <authorList>
            <person name="Mayya V."/>
            <person name="Lundgren D.H."/>
            <person name="Hwang S.-I."/>
            <person name="Rezaul K."/>
            <person name="Wu L."/>
            <person name="Eng J.K."/>
            <person name="Rodionov V."/>
            <person name="Han D.K."/>
        </authorList>
    </citation>
    <scope>PHOSPHORYLATION [LARGE SCALE ANALYSIS] AT SER-242; THR-263; SER-986; SER-993; SER-1014 AND SER-1017</scope>
    <scope>IDENTIFICATION BY MASS SPECTROMETRY [LARGE SCALE ANALYSIS]</scope>
    <source>
        <tissue>Leukemic T-cell</tissue>
    </source>
</reference>
<reference key="14">
    <citation type="journal article" date="2010" name="Sci. Signal.">
        <title>Quantitative phosphoproteomics reveals widespread full phosphorylation site occupancy during mitosis.</title>
        <authorList>
            <person name="Olsen J.V."/>
            <person name="Vermeulen M."/>
            <person name="Santamaria A."/>
            <person name="Kumar C."/>
            <person name="Miller M.L."/>
            <person name="Jensen L.J."/>
            <person name="Gnad F."/>
            <person name="Cox J."/>
            <person name="Jensen T.S."/>
            <person name="Nigg E.A."/>
            <person name="Brunak S."/>
            <person name="Mann M."/>
        </authorList>
    </citation>
    <scope>PHOSPHORYLATION [LARGE SCALE ANALYSIS] AT SER-64; SER-198; SER-207; SER-209; SER-242; THR-263; SER-265; SER-370; SER-372; SER-381; SER-845; SER-848; SER-853; SER-877; SER-993; SER-1010; SER-1014; SER-1017; THR-1170; SER-1208; SER-1230; SER-1364; SER-1366 AND SER-1438</scope>
    <scope>IDENTIFICATION BY MASS SPECTROMETRY [LARGE SCALE ANALYSIS]</scope>
    <source>
        <tissue>Cervix carcinoma</tissue>
    </source>
</reference>
<reference key="15">
    <citation type="journal article" date="2011" name="Sci. Signal.">
        <title>System-wide temporal characterization of the proteome and phosphoproteome of human embryonic stem cell differentiation.</title>
        <authorList>
            <person name="Rigbolt K.T."/>
            <person name="Prokhorova T.A."/>
            <person name="Akimov V."/>
            <person name="Henningsen J."/>
            <person name="Johansen P.T."/>
            <person name="Kratchmarova I."/>
            <person name="Kassem M."/>
            <person name="Mann M."/>
            <person name="Olsen J.V."/>
            <person name="Blagoev B."/>
        </authorList>
    </citation>
    <scope>PHOSPHORYLATION [LARGE SCALE ANALYSIS] AT SER-198; THR-237; SER-242; THR-263; SER-265; SER-325; SER-328; SER-370; SER-372; SER-381; SER-845; SER-848; SER-853; SER-877; THR-882; SER-986; SER-993; SER-1010; SER-1017; SER-1191; SER-1194; SER-1208; SER-1210 AND SER-1465</scope>
    <scope>IDENTIFICATION BY MASS SPECTROMETRY [LARGE SCALE ANALYSIS]</scope>
</reference>
<reference key="16">
    <citation type="journal article" date="2013" name="J. Biol. Chem.">
        <title>Identification of Wilms' tumor 1-associating protein complex and its role in alternative splicing and the cell cycle.</title>
        <authorList>
            <person name="Horiuchi K."/>
            <person name="Kawamura T."/>
            <person name="Iwanari H."/>
            <person name="Ohashi R."/>
            <person name="Naito M."/>
            <person name="Kodama T."/>
            <person name="Hamakubo T."/>
        </authorList>
    </citation>
    <scope>IDENTIFICATION IN A MACOM-LIKE COMPLEX</scope>
    <scope>SUBCELLULAR LOCATION</scope>
</reference>
<reference key="17">
    <citation type="journal article" date="2013" name="J. Proteome Res.">
        <title>Toward a comprehensive characterization of a human cancer cell phosphoproteome.</title>
        <authorList>
            <person name="Zhou H."/>
            <person name="Di Palma S."/>
            <person name="Preisinger C."/>
            <person name="Peng M."/>
            <person name="Polat A.N."/>
            <person name="Heck A.J."/>
            <person name="Mohammed S."/>
        </authorList>
    </citation>
    <scope>PHOSPHORYLATION [LARGE SCALE ANALYSIS] AT SER-77; SER-198; SER-207; SER-209; SER-211; SER-238; SER-242; THR-263; SER-265; SER-318; SER-325; SER-370; SER-372; SER-381; SER-643; SER-873; SER-875; SER-877; SER-943; SER-986; SER-993; THR-1033; THR-1170; SER-1364; SER-1366; SER-1386; SER-1406 AND SER-1409</scope>
    <scope>IDENTIFICATION BY MASS SPECTROMETRY [LARGE SCALE ANALYSIS]</scope>
    <source>
        <tissue>Cervix carcinoma</tissue>
        <tissue>Erythroleukemia</tissue>
    </source>
</reference>
<reference key="18">
    <citation type="journal article" date="2014" name="J. Proteomics">
        <title>An enzyme assisted RP-RPLC approach for in-depth analysis of human liver phosphoproteome.</title>
        <authorList>
            <person name="Bian Y."/>
            <person name="Song C."/>
            <person name="Cheng K."/>
            <person name="Dong M."/>
            <person name="Wang F."/>
            <person name="Huang J."/>
            <person name="Sun D."/>
            <person name="Wang L."/>
            <person name="Ye M."/>
            <person name="Zou H."/>
        </authorList>
    </citation>
    <scope>PHOSPHORYLATION [LARGE SCALE ANALYSIS] AT SER-242; SER-370; SER-372; SER-877; SER-1010; SER-1014; SER-1017 AND SER-1210</scope>
    <scope>IDENTIFICATION BY MASS SPECTROMETRY [LARGE SCALE ANALYSIS]</scope>
    <source>
        <tissue>Liver</tissue>
    </source>
</reference>
<reference key="19">
    <citation type="journal article" date="2014" name="Nat. Struct. Mol. Biol.">
        <title>Uncovering global SUMOylation signaling networks in a site-specific manner.</title>
        <authorList>
            <person name="Hendriks I.A."/>
            <person name="D'Souza R.C."/>
            <person name="Yang B."/>
            <person name="Verlaan-de Vries M."/>
            <person name="Mann M."/>
            <person name="Vertegaal A.C."/>
        </authorList>
    </citation>
    <scope>SUMOYLATION [LARGE SCALE ANALYSIS] AT LYS-194</scope>
    <scope>IDENTIFICATION BY MASS SPECTROMETRY [LARGE SCALE ANALYSIS]</scope>
</reference>
<reference key="20">
    <citation type="journal article" date="2015" name="Cell Rep.">
        <title>SUMO-2 orchestrates chromatin modifiers in response to DNA damage.</title>
        <authorList>
            <person name="Hendriks I.A."/>
            <person name="Treffers L.W."/>
            <person name="Verlaan-de Vries M."/>
            <person name="Olsen J.V."/>
            <person name="Vertegaal A.C."/>
        </authorList>
    </citation>
    <scope>SUMOYLATION [LARGE SCALE ANALYSIS] AT LYS-194</scope>
    <scope>IDENTIFICATION BY MASS SPECTROMETRY [LARGE SCALE ANALYSIS]</scope>
</reference>
<reference key="21">
    <citation type="journal article" date="2015" name="Mol. Cell. Proteomics">
        <title>System-wide analysis of SUMOylation dynamics in response to replication stress reveals novel small ubiquitin-like modified target proteins and acceptor lysines relevant for genome stability.</title>
        <authorList>
            <person name="Xiao Z."/>
            <person name="Chang J.G."/>
            <person name="Hendriks I.A."/>
            <person name="Sigurdsson J.O."/>
            <person name="Olsen J.V."/>
            <person name="Vertegaal A.C."/>
        </authorList>
    </citation>
    <scope>SUMOYLATION [LARGE SCALE ANALYSIS] AT LYS-194</scope>
    <scope>IDENTIFICATION BY MASS SPECTROMETRY [LARGE SCALE ANALYSIS]</scope>
</reference>
<reference key="22">
    <citation type="journal article" date="2017" name="Nat. Struct. Mol. Biol.">
        <title>Site-specific mapping of the human SUMO proteome reveals co-modification with phosphorylation.</title>
        <authorList>
            <person name="Hendriks I.A."/>
            <person name="Lyon D."/>
            <person name="Young C."/>
            <person name="Jensen L.J."/>
            <person name="Vertegaal A.C."/>
            <person name="Nielsen M.L."/>
        </authorList>
    </citation>
    <scope>SUMOYLATION [LARGE SCALE ANALYSIS] AT LYS-179 AND LYS-194</scope>
    <scope>IDENTIFICATION BY MASS SPECTROMETRY [LARGE SCALE ANALYSIS]</scope>
</reference>
<reference key="23">
    <citation type="journal article" date="2018" name="Cell Discov.">
        <title>VIRMA mediates preferential m6A mRNA methylation in 3'UTR and near stop codon and associates with alternative polyadenylation.</title>
        <authorList>
            <person name="Yue Y."/>
            <person name="Liu J."/>
            <person name="Cui X."/>
            <person name="Cao J."/>
            <person name="Luo G."/>
            <person name="Zhang Z."/>
            <person name="Cheng T."/>
            <person name="Gao M."/>
            <person name="Shu X."/>
            <person name="Ma H."/>
            <person name="Wang F."/>
            <person name="Wang X."/>
            <person name="Shen B."/>
            <person name="Wang Y."/>
            <person name="Feng X."/>
            <person name="He C."/>
            <person name="Liu J."/>
        </authorList>
    </citation>
    <scope>FUNCTION</scope>
    <scope>IDENTIFICATION IN THE WMM COMPLEX</scope>
</reference>
<protein>
    <recommendedName>
        <fullName evidence="15">Zinc finger CCCH domain-containing protein 13</fullName>
    </recommendedName>
</protein>
<proteinExistence type="evidence at protein level"/>
<feature type="chain" id="PRO_0000050778" description="Zinc finger CCCH domain-containing protein 13">
    <location>
        <begin position="1"/>
        <end position="1668"/>
    </location>
</feature>
<feature type="zinc finger region" description="C3H1-type" evidence="3">
    <location>
        <begin position="36"/>
        <end position="64"/>
    </location>
</feature>
<feature type="region of interest" description="Disordered" evidence="4">
    <location>
        <begin position="1"/>
        <end position="38"/>
    </location>
</feature>
<feature type="region of interest" description="Disordered" evidence="4">
    <location>
        <begin position="56"/>
        <end position="157"/>
    </location>
</feature>
<feature type="region of interest" description="Disordered" evidence="4">
    <location>
        <begin position="190"/>
        <end position="1112"/>
    </location>
</feature>
<feature type="region of interest" description="Disordered" evidence="4">
    <location>
        <begin position="1125"/>
        <end position="1466"/>
    </location>
</feature>
<feature type="coiled-coil region" evidence="2">
    <location>
        <begin position="645"/>
        <end position="789"/>
    </location>
</feature>
<feature type="coiled-coil region" evidence="2">
    <location>
        <begin position="1300"/>
        <end position="1366"/>
    </location>
</feature>
<feature type="compositionally biased region" description="Polar residues" evidence="4">
    <location>
        <begin position="10"/>
        <end position="23"/>
    </location>
</feature>
<feature type="compositionally biased region" description="Basic and acidic residues" evidence="4">
    <location>
        <begin position="76"/>
        <end position="136"/>
    </location>
</feature>
<feature type="compositionally biased region" description="Low complexity" evidence="4">
    <location>
        <begin position="204"/>
        <end position="213"/>
    </location>
</feature>
<feature type="compositionally biased region" description="Basic residues" evidence="4">
    <location>
        <begin position="214"/>
        <end position="224"/>
    </location>
</feature>
<feature type="compositionally biased region" description="Polar residues" evidence="4">
    <location>
        <begin position="239"/>
        <end position="254"/>
    </location>
</feature>
<feature type="compositionally biased region" description="Basic and acidic residues" evidence="4">
    <location>
        <begin position="283"/>
        <end position="315"/>
    </location>
</feature>
<feature type="compositionally biased region" description="Low complexity" evidence="4">
    <location>
        <begin position="323"/>
        <end position="346"/>
    </location>
</feature>
<feature type="compositionally biased region" description="Low complexity" evidence="4">
    <location>
        <begin position="370"/>
        <end position="382"/>
    </location>
</feature>
<feature type="compositionally biased region" description="Basic and acidic residues" evidence="4">
    <location>
        <begin position="394"/>
        <end position="434"/>
    </location>
</feature>
<feature type="compositionally biased region" description="Basic and acidic residues" evidence="4">
    <location>
        <begin position="442"/>
        <end position="575"/>
    </location>
</feature>
<feature type="compositionally biased region" description="Low complexity" evidence="4">
    <location>
        <begin position="584"/>
        <end position="593"/>
    </location>
</feature>
<feature type="compositionally biased region" description="Basic and acidic residues" evidence="4">
    <location>
        <begin position="594"/>
        <end position="640"/>
    </location>
</feature>
<feature type="compositionally biased region" description="Basic and acidic residues" evidence="4">
    <location>
        <begin position="649"/>
        <end position="821"/>
    </location>
</feature>
<feature type="compositionally biased region" description="Basic and acidic residues" evidence="4">
    <location>
        <begin position="881"/>
        <end position="957"/>
    </location>
</feature>
<feature type="compositionally biased region" description="Basic residues" evidence="4">
    <location>
        <begin position="958"/>
        <end position="969"/>
    </location>
</feature>
<feature type="compositionally biased region" description="Basic and acidic residues" evidence="4">
    <location>
        <begin position="970"/>
        <end position="981"/>
    </location>
</feature>
<feature type="compositionally biased region" description="Basic residues" evidence="4">
    <location>
        <begin position="996"/>
        <end position="1010"/>
    </location>
</feature>
<feature type="compositionally biased region" description="Basic and acidic residues" evidence="4">
    <location>
        <begin position="1073"/>
        <end position="1083"/>
    </location>
</feature>
<feature type="compositionally biased region" description="Low complexity" evidence="4">
    <location>
        <begin position="1084"/>
        <end position="1100"/>
    </location>
</feature>
<feature type="compositionally biased region" description="Low complexity" evidence="4">
    <location>
        <begin position="1125"/>
        <end position="1153"/>
    </location>
</feature>
<feature type="compositionally biased region" description="Basic and acidic residues" evidence="4">
    <location>
        <begin position="1163"/>
        <end position="1188"/>
    </location>
</feature>
<feature type="compositionally biased region" description="Basic and acidic residues" evidence="4">
    <location>
        <begin position="1213"/>
        <end position="1223"/>
    </location>
</feature>
<feature type="compositionally biased region" description="Basic and acidic residues" evidence="4">
    <location>
        <begin position="1231"/>
        <end position="1286"/>
    </location>
</feature>
<feature type="compositionally biased region" description="Basic and acidic residues" evidence="4">
    <location>
        <begin position="1294"/>
        <end position="1379"/>
    </location>
</feature>
<feature type="compositionally biased region" description="Basic and acidic residues" evidence="4">
    <location>
        <begin position="1386"/>
        <end position="1421"/>
    </location>
</feature>
<feature type="compositionally biased region" description="Basic and acidic residues" evidence="4">
    <location>
        <begin position="1429"/>
        <end position="1438"/>
    </location>
</feature>
<feature type="modified residue" description="Phosphoserine" evidence="23">
    <location>
        <position position="64"/>
    </location>
</feature>
<feature type="modified residue" description="Phosphoserine" evidence="25">
    <location>
        <position position="77"/>
    </location>
</feature>
<feature type="modified residue" description="Phosphoserine" evidence="19 23 24 25">
    <location>
        <position position="198"/>
    </location>
</feature>
<feature type="modified residue" description="Phosphoserine" evidence="21 23 25">
    <location>
        <position position="207"/>
    </location>
</feature>
<feature type="modified residue" description="Phosphoserine" evidence="21 23 25">
    <location>
        <position position="209"/>
    </location>
</feature>
<feature type="modified residue" description="Phosphoserine" evidence="25">
    <location>
        <position position="211"/>
    </location>
</feature>
<feature type="modified residue" description="Phosphothreonine" evidence="24">
    <location>
        <position position="237"/>
    </location>
</feature>
<feature type="modified residue" description="Phosphoserine" evidence="25">
    <location>
        <position position="238"/>
    </location>
</feature>
<feature type="modified residue" description="Phosphoserine" evidence="18 21 22 23 24 25 26">
    <location>
        <position position="242"/>
    </location>
</feature>
<feature type="modified residue" description="Phosphothreonine" evidence="17 18 19 22 23 24 25">
    <location>
        <position position="263"/>
    </location>
</feature>
<feature type="modified residue" description="Phosphoserine" evidence="17 18 19 23 24 25">
    <location>
        <position position="265"/>
    </location>
</feature>
<feature type="modified residue" description="Phosphoserine" evidence="21">
    <location>
        <position position="316"/>
    </location>
</feature>
<feature type="modified residue" description="Phosphoserine" evidence="21 25">
    <location>
        <position position="318"/>
    </location>
</feature>
<feature type="modified residue" description="Phosphoserine" evidence="21 24 25">
    <location>
        <position position="325"/>
    </location>
</feature>
<feature type="modified residue" description="Phosphoserine" evidence="24">
    <location>
        <position position="328"/>
    </location>
</feature>
<feature type="modified residue" description="Phosphothreonine" evidence="21">
    <location>
        <position position="354"/>
    </location>
</feature>
<feature type="modified residue" description="Phosphothreonine" evidence="21">
    <location>
        <position position="364"/>
    </location>
</feature>
<feature type="modified residue" description="Phosphoserine" evidence="21 23 24 25 26">
    <location>
        <position position="370"/>
    </location>
</feature>
<feature type="modified residue" description="Phosphoserine" evidence="21 23 24 25 26">
    <location>
        <position position="372"/>
    </location>
</feature>
<feature type="modified residue" description="Phosphoserine" evidence="21 23 24 25">
    <location>
        <position position="381"/>
    </location>
</feature>
<feature type="modified residue" description="Phosphoserine" evidence="25">
    <location>
        <position position="643"/>
    </location>
</feature>
<feature type="modified residue" description="Phosphoserine" evidence="21">
    <location>
        <position position="831"/>
    </location>
</feature>
<feature type="modified residue" description="Phosphoserine" evidence="21">
    <location>
        <position position="833"/>
    </location>
</feature>
<feature type="modified residue" description="Phosphoserine" evidence="21">
    <location>
        <position position="837"/>
    </location>
</feature>
<feature type="modified residue" description="Phosphoserine" evidence="21 23 24">
    <location>
        <position position="845"/>
    </location>
</feature>
<feature type="modified residue" description="Phosphoserine" evidence="21 23 24">
    <location>
        <position position="848"/>
    </location>
</feature>
<feature type="modified residue" description="Phosphoserine" evidence="21 23 24">
    <location>
        <position position="853"/>
    </location>
</feature>
<feature type="modified residue" description="Phosphoserine" evidence="25">
    <location>
        <position position="873"/>
    </location>
</feature>
<feature type="modified residue" description="Phosphoserine" evidence="21 25">
    <location>
        <position position="875"/>
    </location>
</feature>
<feature type="modified residue" description="Phosphoserine" evidence="21 23 24 25 26">
    <location>
        <position position="877"/>
    </location>
</feature>
<feature type="modified residue" description="Phosphothreonine" evidence="24">
    <location>
        <position position="882"/>
    </location>
</feature>
<feature type="modified residue" description="Phosphoserine" evidence="25">
    <location>
        <position position="943"/>
    </location>
</feature>
<feature type="modified residue" description="Phosphoserine" evidence="21 22 24 25">
    <location>
        <position position="986"/>
    </location>
</feature>
<feature type="modified residue" description="Phosphoserine" evidence="18 21 22 23 24 25">
    <location>
        <position position="993"/>
    </location>
</feature>
<feature type="modified residue" description="Phosphoserine" evidence="21 23 24 26">
    <location>
        <position position="1010"/>
    </location>
</feature>
<feature type="modified residue" description="Phosphoserine" evidence="21 22 23 26">
    <location>
        <position position="1014"/>
    </location>
</feature>
<feature type="modified residue" description="Phosphoserine" evidence="21 22 23 24 26">
    <location>
        <position position="1017"/>
    </location>
</feature>
<feature type="modified residue" description="Phosphothreonine" evidence="25">
    <location>
        <position position="1033"/>
    </location>
</feature>
<feature type="modified residue" description="Phosphothreonine" evidence="23 25">
    <location>
        <position position="1170"/>
    </location>
</feature>
<feature type="modified residue" description="Phosphoserine" evidence="24">
    <location>
        <position position="1191"/>
    </location>
</feature>
<feature type="modified residue" description="Phosphoserine" evidence="24">
    <location>
        <position position="1194"/>
    </location>
</feature>
<feature type="modified residue" description="Phosphoserine" evidence="23 24">
    <location>
        <position position="1208"/>
    </location>
</feature>
<feature type="modified residue" description="Phosphoserine" evidence="24 26">
    <location>
        <position position="1210"/>
    </location>
</feature>
<feature type="modified residue" description="Phosphoserine" evidence="23">
    <location>
        <position position="1230"/>
    </location>
</feature>
<feature type="modified residue" description="Phosphoserine" evidence="23 25">
    <location>
        <position position="1364"/>
    </location>
</feature>
<feature type="modified residue" description="Phosphoserine" evidence="23 25">
    <location>
        <position position="1366"/>
    </location>
</feature>
<feature type="modified residue" description="Phosphoserine" evidence="20">
    <location>
        <position position="1382"/>
    </location>
</feature>
<feature type="modified residue" description="Phosphoserine" evidence="25">
    <location>
        <position position="1386"/>
    </location>
</feature>
<feature type="modified residue" description="Phosphoserine" evidence="25">
    <location>
        <position position="1406"/>
    </location>
</feature>
<feature type="modified residue" description="Phosphoserine" evidence="25">
    <location>
        <position position="1409"/>
    </location>
</feature>
<feature type="modified residue" description="Phosphoserine" evidence="23">
    <location>
        <position position="1438"/>
    </location>
</feature>
<feature type="modified residue" description="Phosphoserine" evidence="24">
    <location>
        <position position="1465"/>
    </location>
</feature>
<feature type="cross-link" description="Glycyl lysine isopeptide (Lys-Gly) (interchain with G-Cter in SUMO2)" evidence="30">
    <location>
        <position position="179"/>
    </location>
</feature>
<feature type="cross-link" description="Glycyl lysine isopeptide (Lys-Gly) (interchain with G-Cter in SUMO2)" evidence="27 28 29 30">
    <location>
        <position position="194"/>
    </location>
</feature>
<feature type="splice variant" id="VSP_027202" description="In isoform 2." evidence="12 14">
    <original>E</original>
    <variation>EA</variation>
    <location>
        <position position="1440"/>
    </location>
</feature>
<feature type="splice variant" id="VSP_014252" description="In isoform 2." evidence="12 14">
    <original>DADNLF</original>
    <variation>GSFILL</variation>
    <location>
        <begin position="1558"/>
        <end position="1563"/>
    </location>
</feature>
<feature type="splice variant" id="VSP_014253" description="In isoform 2." evidence="12 14">
    <location>
        <begin position="1564"/>
        <end position="1668"/>
    </location>
</feature>
<feature type="sequence variant" id="VAR_022727" description="In dbSNP:rs9534264." evidence="5 6 7 10">
    <original>E</original>
    <variation>D</variation>
    <location>
        <position position="1429"/>
    </location>
</feature>
<feature type="sequence conflict" description="In Ref. 5; BAA74876." evidence="15" ref="5">
    <original>EKE</original>
    <variation>KAR</variation>
    <location>
        <begin position="702"/>
        <end position="704"/>
    </location>
</feature>
<feature type="sequence conflict" description="In Ref. 3; CAD38544." evidence="15" ref="3">
    <original>I</original>
    <variation>K</variation>
    <location>
        <position position="967"/>
    </location>
</feature>
<feature type="strand" evidence="31">
    <location>
        <begin position="1505"/>
        <end position="1508"/>
    </location>
</feature>
<feature type="helix" evidence="31">
    <location>
        <begin position="1518"/>
        <end position="1521"/>
    </location>
</feature>
<feature type="helix" evidence="31">
    <location>
        <begin position="1523"/>
        <end position="1530"/>
    </location>
</feature>
<feature type="helix" evidence="31">
    <location>
        <begin position="1534"/>
        <end position="1537"/>
    </location>
</feature>
<feature type="helix" evidence="31">
    <location>
        <begin position="1539"/>
        <end position="1550"/>
    </location>
</feature>
<feature type="helix" evidence="31">
    <location>
        <begin position="1556"/>
        <end position="1560"/>
    </location>
</feature>
<feature type="strand" evidence="31">
    <location>
        <begin position="1565"/>
        <end position="1567"/>
    </location>
</feature>
<feature type="helix" evidence="31">
    <location>
        <begin position="1568"/>
        <end position="1582"/>
    </location>
</feature>
<feature type="turn" evidence="31">
    <location>
        <begin position="1583"/>
        <end position="1586"/>
    </location>
</feature>
<feature type="strand" evidence="31">
    <location>
        <begin position="1589"/>
        <end position="1592"/>
    </location>
</feature>
<feature type="helix" evidence="31">
    <location>
        <begin position="1597"/>
        <end position="1607"/>
    </location>
</feature>
<feature type="helix" evidence="31">
    <location>
        <begin position="1627"/>
        <end position="1642"/>
    </location>
</feature>
<feature type="modified residue" description="Phosphoserine" evidence="21">
    <location sequence="Q5T200-2">
        <position position="1453"/>
    </location>
</feature>
<feature type="modified residue" description="Phosphoserine" evidence="21">
    <location sequence="Q5T200-2">
        <position position="1456"/>
    </location>
</feature>
<feature type="modified residue" description="Phosphoserine" evidence="21">
    <location sequence="Q5T200-2">
        <position position="1466"/>
    </location>
</feature>